<dbReference type="EMBL" id="AE013599">
    <property type="protein sequence ID" value="AAF58153.2"/>
    <property type="molecule type" value="Genomic_DNA"/>
</dbReference>
<dbReference type="EMBL" id="AE013599">
    <property type="protein sequence ID" value="AAM68528.1"/>
    <property type="molecule type" value="Genomic_DNA"/>
</dbReference>
<dbReference type="EMBL" id="AE013599">
    <property type="protein sequence ID" value="ABI31097.1"/>
    <property type="molecule type" value="Genomic_DNA"/>
</dbReference>
<dbReference type="EMBL" id="AE013599">
    <property type="protein sequence ID" value="ABV53803.1"/>
    <property type="molecule type" value="Genomic_DNA"/>
</dbReference>
<dbReference type="EMBL" id="AY069181">
    <property type="protein sequence ID" value="AAL39326.1"/>
    <property type="molecule type" value="mRNA"/>
</dbReference>
<dbReference type="RefSeq" id="NP_001036548.1">
    <molecule id="A8DYE2-2"/>
    <property type="nucleotide sequence ID" value="NM_001043083.2"/>
</dbReference>
<dbReference type="RefSeq" id="NP_001036549.1">
    <molecule id="A8DYE2-4"/>
    <property type="nucleotide sequence ID" value="NM_001043084.2"/>
</dbReference>
<dbReference type="RefSeq" id="NP_001036550.2">
    <property type="nucleotide sequence ID" value="NM_001043085.2"/>
</dbReference>
<dbReference type="RefSeq" id="NP_001097320.1">
    <molecule id="A8DYE2-1"/>
    <property type="nucleotide sequence ID" value="NM_001103850.2"/>
</dbReference>
<dbReference type="SMR" id="A8DYE2"/>
<dbReference type="BioGRID" id="62431">
    <property type="interactions" value="3"/>
</dbReference>
<dbReference type="FunCoup" id="A8DYE2">
    <property type="interactions" value="313"/>
</dbReference>
<dbReference type="IntAct" id="A8DYE2">
    <property type="interactions" value="4"/>
</dbReference>
<dbReference type="STRING" id="7227.FBpp0308223"/>
<dbReference type="TCDB" id="1.A.4.5.9">
    <property type="family name" value="the transient receptor potential ca2+/cation channel (trp-cc) family"/>
</dbReference>
<dbReference type="GlyGen" id="A8DYE2">
    <property type="glycosylation" value="2 sites"/>
</dbReference>
<dbReference type="iPTMnet" id="A8DYE2"/>
<dbReference type="PaxDb" id="7227-FBpp0112395"/>
<dbReference type="DNASU" id="36694"/>
<dbReference type="EnsemblMetazoa" id="FBtr0339075">
    <molecule id="A8DYE2-2"/>
    <property type="protein sequence ID" value="FBpp0308221"/>
    <property type="gene ID" value="FBgn0265194"/>
</dbReference>
<dbReference type="EnsemblMetazoa" id="FBtr0339076">
    <molecule id="A8DYE2-4"/>
    <property type="protein sequence ID" value="FBpp0308222"/>
    <property type="gene ID" value="FBgn0265194"/>
</dbReference>
<dbReference type="EnsemblMetazoa" id="FBtr0339077">
    <molecule id="A8DYE2-1"/>
    <property type="protein sequence ID" value="FBpp0308223"/>
    <property type="gene ID" value="FBgn0265194"/>
</dbReference>
<dbReference type="GeneID" id="36694"/>
<dbReference type="KEGG" id="dme:Dmel_CG44240"/>
<dbReference type="UCSC" id="CG34123-RB">
    <molecule id="A8DYE2-1"/>
    <property type="organism name" value="d. melanogaster"/>
</dbReference>
<dbReference type="AGR" id="FB:FBgn0265194"/>
<dbReference type="CTD" id="36694"/>
<dbReference type="FlyBase" id="FBgn0265194">
    <property type="gene designation" value="Trpm"/>
</dbReference>
<dbReference type="VEuPathDB" id="VectorBase:FBgn0265194"/>
<dbReference type="eggNOG" id="KOG3614">
    <property type="taxonomic scope" value="Eukaryota"/>
</dbReference>
<dbReference type="GeneTree" id="ENSGT00940000168570"/>
<dbReference type="InParanoid" id="A8DYE2"/>
<dbReference type="OMA" id="YAIAYIC"/>
<dbReference type="OrthoDB" id="301415at2759"/>
<dbReference type="PhylomeDB" id="A8DYE2"/>
<dbReference type="Reactome" id="R-DME-3295583">
    <property type="pathway name" value="TRP channels"/>
</dbReference>
<dbReference type="BioGRID-ORCS" id="36694">
    <property type="hits" value="0 hits in 3 CRISPR screens"/>
</dbReference>
<dbReference type="GenomeRNAi" id="36694"/>
<dbReference type="PRO" id="PR:A8DYE2"/>
<dbReference type="Proteomes" id="UP000000803">
    <property type="component" value="Chromosome 2R"/>
</dbReference>
<dbReference type="Bgee" id="FBgn0265194">
    <property type="expression patterns" value="Expressed in adult Malpighian tubule principal cell of initial segment in Malpighian tubule and 215 other cell types or tissues"/>
</dbReference>
<dbReference type="ExpressionAtlas" id="A8DYE2">
    <property type="expression patterns" value="baseline and differential"/>
</dbReference>
<dbReference type="GO" id="GO:0034703">
    <property type="term" value="C:cation channel complex"/>
    <property type="evidence" value="ECO:0000314"/>
    <property type="project" value="FlyBase"/>
</dbReference>
<dbReference type="GO" id="GO:0005886">
    <property type="term" value="C:plasma membrane"/>
    <property type="evidence" value="ECO:0000318"/>
    <property type="project" value="GO_Central"/>
</dbReference>
<dbReference type="GO" id="GO:0022890">
    <property type="term" value="F:inorganic cation transmembrane transporter activity"/>
    <property type="evidence" value="ECO:0000314"/>
    <property type="project" value="FlyBase"/>
</dbReference>
<dbReference type="GO" id="GO:0097682">
    <property type="term" value="F:intracellularly phosphatidylinositol-3,5-bisphosphate-gated monatomic cation channel activity"/>
    <property type="evidence" value="ECO:0000314"/>
    <property type="project" value="FlyBase"/>
</dbReference>
<dbReference type="GO" id="GO:0005261">
    <property type="term" value="F:monoatomic cation channel activity"/>
    <property type="evidence" value="ECO:0000318"/>
    <property type="project" value="GO_Central"/>
</dbReference>
<dbReference type="GO" id="GO:0005385">
    <property type="term" value="F:zinc ion transmembrane transporter activity"/>
    <property type="evidence" value="ECO:0000314"/>
    <property type="project" value="FlyBase"/>
</dbReference>
<dbReference type="GO" id="GO:0006882">
    <property type="term" value="P:intracellular zinc ion homeostasis"/>
    <property type="evidence" value="ECO:0000315"/>
    <property type="project" value="FlyBase"/>
</dbReference>
<dbReference type="GO" id="GO:0010960">
    <property type="term" value="P:magnesium ion homeostasis"/>
    <property type="evidence" value="ECO:0000315"/>
    <property type="project" value="FlyBase"/>
</dbReference>
<dbReference type="GO" id="GO:0030001">
    <property type="term" value="P:metal ion transport"/>
    <property type="evidence" value="ECO:0000314"/>
    <property type="project" value="FlyBase"/>
</dbReference>
<dbReference type="GO" id="GO:0098655">
    <property type="term" value="P:monoatomic cation transmembrane transport"/>
    <property type="evidence" value="ECO:0000314"/>
    <property type="project" value="FlyBase"/>
</dbReference>
<dbReference type="GO" id="GO:0051262">
    <property type="term" value="P:protein tetramerization"/>
    <property type="evidence" value="ECO:0007669"/>
    <property type="project" value="InterPro"/>
</dbReference>
<dbReference type="Gene3D" id="1.20.5.1010">
    <property type="entry name" value="TRPM, tetramerisation domain"/>
    <property type="match status" value="1"/>
</dbReference>
<dbReference type="InterPro" id="IPR005821">
    <property type="entry name" value="Ion_trans_dom"/>
</dbReference>
<dbReference type="InterPro" id="IPR050927">
    <property type="entry name" value="TRPM"/>
</dbReference>
<dbReference type="InterPro" id="IPR041491">
    <property type="entry name" value="TRPM_SLOG"/>
</dbReference>
<dbReference type="InterPro" id="IPR032415">
    <property type="entry name" value="TRPM_tetra"/>
</dbReference>
<dbReference type="InterPro" id="IPR037162">
    <property type="entry name" value="TRPM_tetra_sf"/>
</dbReference>
<dbReference type="PANTHER" id="PTHR13800:SF1">
    <property type="entry name" value="TRANSIENT RECEPTOR POTENTIAL CATION CHANNEL TRPM"/>
    <property type="match status" value="1"/>
</dbReference>
<dbReference type="PANTHER" id="PTHR13800">
    <property type="entry name" value="TRANSIENT RECEPTOR POTENTIAL CATION CHANNEL, SUBFAMILY M, MEMBER 6"/>
    <property type="match status" value="1"/>
</dbReference>
<dbReference type="Pfam" id="PF00520">
    <property type="entry name" value="Ion_trans"/>
    <property type="match status" value="1"/>
</dbReference>
<dbReference type="Pfam" id="PF18139">
    <property type="entry name" value="LSDAT_euk"/>
    <property type="match status" value="1"/>
</dbReference>
<dbReference type="Pfam" id="PF25508">
    <property type="entry name" value="TRPM2"/>
    <property type="match status" value="1"/>
</dbReference>
<dbReference type="Pfam" id="PF16519">
    <property type="entry name" value="TRPM_tetra"/>
    <property type="match status" value="1"/>
</dbReference>
<name>TRPCG_DROME</name>
<proteinExistence type="evidence at protein level"/>
<evidence type="ECO:0000250" key="1"/>
<evidence type="ECO:0000255" key="2"/>
<evidence type="ECO:0000256" key="3">
    <source>
        <dbReference type="SAM" id="MobiDB-lite"/>
    </source>
</evidence>
<evidence type="ECO:0000269" key="4">
    <source>
    </source>
</evidence>
<evidence type="ECO:0000269" key="5">
    <source>
    </source>
</evidence>
<evidence type="ECO:0000303" key="6">
    <source>
    </source>
</evidence>
<evidence type="ECO:0000305" key="7"/>
<comment type="function">
    <text evidence="1">Calcium channel mediating constitutive calcium ion entry.</text>
</comment>
<comment type="subcellular location">
    <subcellularLocation>
        <location evidence="7">Membrane</location>
        <topology evidence="7">Multi-pass membrane protein</topology>
    </subcellularLocation>
</comment>
<comment type="alternative products">
    <event type="alternative splicing"/>
    <isoform>
        <id>A8DYE2-1</id>
        <name>E</name>
        <sequence type="displayed"/>
    </isoform>
    <isoform>
        <id>A8DYE2-2</id>
        <name>B</name>
        <sequence type="described" ref="VSP_052814 VSP_052815 VSP_052818 VSP_052819"/>
    </isoform>
    <isoform>
        <id>A8DYE2-3</id>
        <name>C</name>
        <sequence type="described" ref="VSP_052814 VSP_052815 VSP_052816 VSP_052817"/>
    </isoform>
    <isoform>
        <id>A8DYE2-4</id>
        <name>D</name>
        <sequence type="described" ref="VSP_052814 VSP_052815"/>
    </isoform>
</comment>
<comment type="RNA editing">
    <location>
        <position position="1684" evidence="4"/>
    </location>
    <location>
        <position position="1860" evidence="4"/>
    </location>
    <location>
        <position position="1900" evidence="4"/>
    </location>
    <location>
        <position position="1915" evidence="4"/>
    </location>
    <location>
        <position position="1917" evidence="4"/>
    </location>
    <text>Partially edited. Target of Adar.</text>
</comment>
<comment type="similarity">
    <text evidence="7">Belongs to the transient receptor (TC 1.A.4) family. LTrpC subfamily.</text>
</comment>
<organism>
    <name type="scientific">Drosophila melanogaster</name>
    <name type="common">Fruit fly</name>
    <dbReference type="NCBI Taxonomy" id="7227"/>
    <lineage>
        <taxon>Eukaryota</taxon>
        <taxon>Metazoa</taxon>
        <taxon>Ecdysozoa</taxon>
        <taxon>Arthropoda</taxon>
        <taxon>Hexapoda</taxon>
        <taxon>Insecta</taxon>
        <taxon>Pterygota</taxon>
        <taxon>Neoptera</taxon>
        <taxon>Endopterygota</taxon>
        <taxon>Diptera</taxon>
        <taxon>Brachycera</taxon>
        <taxon>Muscomorpha</taxon>
        <taxon>Ephydroidea</taxon>
        <taxon>Drosophilidae</taxon>
        <taxon>Drosophila</taxon>
        <taxon>Sophophora</taxon>
    </lineage>
</organism>
<keyword id="KW-0025">Alternative splicing</keyword>
<keyword id="KW-0407">Ion channel</keyword>
<keyword id="KW-0406">Ion transport</keyword>
<keyword id="KW-0472">Membrane</keyword>
<keyword id="KW-0597">Phosphoprotein</keyword>
<keyword id="KW-1185">Reference proteome</keyword>
<keyword id="KW-0691">RNA editing</keyword>
<keyword id="KW-0812">Transmembrane</keyword>
<keyword id="KW-1133">Transmembrane helix</keyword>
<keyword id="KW-0813">Transport</keyword>
<sequence length="2023" mass="225538">MVVTDSPLAPHKYVRRISKDFSTVRRYSNTPAVVVGSFRASTSAFIAAESAAHLPTCSSPTTRTPVSTPRGIRRRQRMRKRSSVSSTLSKVLILNVRDLLKAHAGSEPLKEHQPRSWIETNFQKRECIKFIPCPKDDTKCCCGQAQITHQTIPGIESGSPGDLWLPTKHTRPQPTDAYGTIEFQGGAHPTKAQYVRLSFDTRPELLVQLFTKEWNLELPKLLITVQGGKANFDLQAKLKKEIRKGLLKAAKTTGAWIFTGGTNTGVTKQVGDALLLEGQQRTGRVVSIGIAPWGIVERNHELLGHNREVPCHSISSPRSKLAVLNNRHAYFLLVDNGTQAKYGAELILRRKLEKFISNLKLHPFTHSSTPVVCLVIEGGTNTIRAVLEYVTDSPPVPVVVCDGSGRAADLLAFVHKYASDGEEQPVLESMRDYLIGTIQKTFEVGLDQSEKLYQELLQCTRNKNLITVFRIQEKPEGEAQELDQTILTALFKSQHLSPPEQLSLALTWNRVDIARSEIFVYGQEWPNGALDEAMMQALEHDRIDFVKLLLENGVSMKKFLTIPRLEELYNTKHGPANTLGYILRDVRPHIPKGYIYTLHDIGLVINKLMGGAYRSYYTRRKFRPIYAKVMNSYANACRKSSTYQYQRYAGANSLSLVTGLLPFTSEMALFEFPFNELLIWAVLTKRQQMALLMWTHGEEALAKSLVSCKLYKAMAHEAAEDDLDTEIYEELRSYAKEFESKGNKLLDFSYRQDAEKAQRLLTCELHSWSNQSCLSLAVAANHRALLAHPCSQVILADLWMGGLRTRKNTNFKVILGLAMPFYIRQLDFKSKEELQQMPQTEEEHLENQNLDNDDSDRSQPDAEALLADTYSVRDTKVHENGKVSLTDSDTAQFREFFNLSEYNEVKQHQPLRLKKKFYEFYTAPITKFWADSIAYMFFLIMFSFTVLVKMEQMPRWQEWYSIAYITTLGFEKVREIISSEPVAITHKFSVWAWNMWNPCDGAAIILFVIGLAFRFRENTMDIGRVIYCVDSIYWYLRILNILGVNKYLGPLVTMMGKMVKNMIYFVVLLAVVLMSFGVSRQAILYPNKQPTWSLIKEVTFQPYFMLYGEVFAGDIDPPCGEDPSQPGCVTGHWVTPITMSMYLLIANILLINLLIAVFNNIFNEVNSVSHQVWMFQRFTVVMEYQQKPVLPPPFIALCHFYSLLKYCVRKAKGLEVQRDNGLKLFLEKDDLERLYDFEEECVEGFFHEQEIILNQSTDERVKNTTERVETMSQKIEDINQKENIQTATVQNIEFRLRKMEESSEQILSHLAVIHRFMSTHTAGADDLRGSTINIPGEMQRMRTISISDTEGGSGPGGNGGGGGGGGAIVPLGLGAGLNLNSLQVTTRRRFNRSLTEVRPDAYIFDEGTHFEVVPLPEEPDEVVKSREALNEQVVRKASMQSEADSDIYIPVSQRPSTCETVKRTPYVTVRQDTGASTESKDTLTPMGNNDDDQTLVGGDNSDDATPDINFEAARHRALRQRTVSLCRRNSETYSLTGADINRSHISLNQLASLSRRQMSLTQSEPDSDKDAPIAQGSAHPGKSVLHAKPSRNILLKLHSEYTSITDELESVCHMIASPTVSLPSNKASLDRPKTEMSRAEAAALLEKKHLKECEENDYMILEGLIESRGSIDASAQGFEIGVSIDYSHRYPLRRETAVELSPSKPSVDGDLMGGGEGGGAGGGDSSDTSGAGSCGAMVGISSGFQLKNERPWQRNSSMEQQTYPSPLVPTRATSDFLNPPYEGRLFKKSSESLQKNSSTETDYSAHPYRFIKQSSNETNTSLTGSYNVDTPSLTAEPSLDAGDSHSATGISISVGAVGGTATARYQPIRTASVGAADGRRLREESSSSLDLSSSGPVTMQAAPAPPVRPMLLKKQFSVDQGKPSQTAAEAVPQTPEAAQAGQAKLISTLKPQPFASKLGMNVLKESSSSTDESVGSSAKSSNPALSIPQISTHLVQDEIAKLSSNIKSSTESEKDPPFNETMC</sequence>
<reference key="1">
    <citation type="journal article" date="2000" name="Science">
        <title>The genome sequence of Drosophila melanogaster.</title>
        <authorList>
            <person name="Adams M.D."/>
            <person name="Celniker S.E."/>
            <person name="Holt R.A."/>
            <person name="Evans C.A."/>
            <person name="Gocayne J.D."/>
            <person name="Amanatides P.G."/>
            <person name="Scherer S.E."/>
            <person name="Li P.W."/>
            <person name="Hoskins R.A."/>
            <person name="Galle R.F."/>
            <person name="George R.A."/>
            <person name="Lewis S.E."/>
            <person name="Richards S."/>
            <person name="Ashburner M."/>
            <person name="Henderson S.N."/>
            <person name="Sutton G.G."/>
            <person name="Wortman J.R."/>
            <person name="Yandell M.D."/>
            <person name="Zhang Q."/>
            <person name="Chen L.X."/>
            <person name="Brandon R.C."/>
            <person name="Rogers Y.-H.C."/>
            <person name="Blazej R.G."/>
            <person name="Champe M."/>
            <person name="Pfeiffer B.D."/>
            <person name="Wan K.H."/>
            <person name="Doyle C."/>
            <person name="Baxter E.G."/>
            <person name="Helt G."/>
            <person name="Nelson C.R."/>
            <person name="Miklos G.L.G."/>
            <person name="Abril J.F."/>
            <person name="Agbayani A."/>
            <person name="An H.-J."/>
            <person name="Andrews-Pfannkoch C."/>
            <person name="Baldwin D."/>
            <person name="Ballew R.M."/>
            <person name="Basu A."/>
            <person name="Baxendale J."/>
            <person name="Bayraktaroglu L."/>
            <person name="Beasley E.M."/>
            <person name="Beeson K.Y."/>
            <person name="Benos P.V."/>
            <person name="Berman B.P."/>
            <person name="Bhandari D."/>
            <person name="Bolshakov S."/>
            <person name="Borkova D."/>
            <person name="Botchan M.R."/>
            <person name="Bouck J."/>
            <person name="Brokstein P."/>
            <person name="Brottier P."/>
            <person name="Burtis K.C."/>
            <person name="Busam D.A."/>
            <person name="Butler H."/>
            <person name="Cadieu E."/>
            <person name="Center A."/>
            <person name="Chandra I."/>
            <person name="Cherry J.M."/>
            <person name="Cawley S."/>
            <person name="Dahlke C."/>
            <person name="Davenport L.B."/>
            <person name="Davies P."/>
            <person name="de Pablos B."/>
            <person name="Delcher A."/>
            <person name="Deng Z."/>
            <person name="Mays A.D."/>
            <person name="Dew I."/>
            <person name="Dietz S.M."/>
            <person name="Dodson K."/>
            <person name="Doup L.E."/>
            <person name="Downes M."/>
            <person name="Dugan-Rocha S."/>
            <person name="Dunkov B.C."/>
            <person name="Dunn P."/>
            <person name="Durbin K.J."/>
            <person name="Evangelista C.C."/>
            <person name="Ferraz C."/>
            <person name="Ferriera S."/>
            <person name="Fleischmann W."/>
            <person name="Fosler C."/>
            <person name="Gabrielian A.E."/>
            <person name="Garg N.S."/>
            <person name="Gelbart W.M."/>
            <person name="Glasser K."/>
            <person name="Glodek A."/>
            <person name="Gong F."/>
            <person name="Gorrell J.H."/>
            <person name="Gu Z."/>
            <person name="Guan P."/>
            <person name="Harris M."/>
            <person name="Harris N.L."/>
            <person name="Harvey D.A."/>
            <person name="Heiman T.J."/>
            <person name="Hernandez J.R."/>
            <person name="Houck J."/>
            <person name="Hostin D."/>
            <person name="Houston K.A."/>
            <person name="Howland T.J."/>
            <person name="Wei M.-H."/>
            <person name="Ibegwam C."/>
            <person name="Jalali M."/>
            <person name="Kalush F."/>
            <person name="Karpen G.H."/>
            <person name="Ke Z."/>
            <person name="Kennison J.A."/>
            <person name="Ketchum K.A."/>
            <person name="Kimmel B.E."/>
            <person name="Kodira C.D."/>
            <person name="Kraft C.L."/>
            <person name="Kravitz S."/>
            <person name="Kulp D."/>
            <person name="Lai Z."/>
            <person name="Lasko P."/>
            <person name="Lei Y."/>
            <person name="Levitsky A.A."/>
            <person name="Li J.H."/>
            <person name="Li Z."/>
            <person name="Liang Y."/>
            <person name="Lin X."/>
            <person name="Liu X."/>
            <person name="Mattei B."/>
            <person name="McIntosh T.C."/>
            <person name="McLeod M.P."/>
            <person name="McPherson D."/>
            <person name="Merkulov G."/>
            <person name="Milshina N.V."/>
            <person name="Mobarry C."/>
            <person name="Morris J."/>
            <person name="Moshrefi A."/>
            <person name="Mount S.M."/>
            <person name="Moy M."/>
            <person name="Murphy B."/>
            <person name="Murphy L."/>
            <person name="Muzny D.M."/>
            <person name="Nelson D.L."/>
            <person name="Nelson D.R."/>
            <person name="Nelson K.A."/>
            <person name="Nixon K."/>
            <person name="Nusskern D.R."/>
            <person name="Pacleb J.M."/>
            <person name="Palazzolo M."/>
            <person name="Pittman G.S."/>
            <person name="Pan S."/>
            <person name="Pollard J."/>
            <person name="Puri V."/>
            <person name="Reese M.G."/>
            <person name="Reinert K."/>
            <person name="Remington K."/>
            <person name="Saunders R.D.C."/>
            <person name="Scheeler F."/>
            <person name="Shen H."/>
            <person name="Shue B.C."/>
            <person name="Siden-Kiamos I."/>
            <person name="Simpson M."/>
            <person name="Skupski M.P."/>
            <person name="Smith T.J."/>
            <person name="Spier E."/>
            <person name="Spradling A.C."/>
            <person name="Stapleton M."/>
            <person name="Strong R."/>
            <person name="Sun E."/>
            <person name="Svirskas R."/>
            <person name="Tector C."/>
            <person name="Turner R."/>
            <person name="Venter E."/>
            <person name="Wang A.H."/>
            <person name="Wang X."/>
            <person name="Wang Z.-Y."/>
            <person name="Wassarman D.A."/>
            <person name="Weinstock G.M."/>
            <person name="Weissenbach J."/>
            <person name="Williams S.M."/>
            <person name="Woodage T."/>
            <person name="Worley K.C."/>
            <person name="Wu D."/>
            <person name="Yang S."/>
            <person name="Yao Q.A."/>
            <person name="Ye J."/>
            <person name="Yeh R.-F."/>
            <person name="Zaveri J.S."/>
            <person name="Zhan M."/>
            <person name="Zhang G."/>
            <person name="Zhao Q."/>
            <person name="Zheng L."/>
            <person name="Zheng X.H."/>
            <person name="Zhong F.N."/>
            <person name="Zhong W."/>
            <person name="Zhou X."/>
            <person name="Zhu S.C."/>
            <person name="Zhu X."/>
            <person name="Smith H.O."/>
            <person name="Gibbs R.A."/>
            <person name="Myers E.W."/>
            <person name="Rubin G.M."/>
            <person name="Venter J.C."/>
        </authorList>
    </citation>
    <scope>NUCLEOTIDE SEQUENCE [LARGE SCALE GENOMIC DNA]</scope>
    <source>
        <strain>Berkeley</strain>
    </source>
</reference>
<reference key="2">
    <citation type="journal article" date="2002" name="Genome Biol.">
        <title>Annotation of the Drosophila melanogaster euchromatic genome: a systematic review.</title>
        <authorList>
            <person name="Misra S."/>
            <person name="Crosby M.A."/>
            <person name="Mungall C.J."/>
            <person name="Matthews B.B."/>
            <person name="Campbell K.S."/>
            <person name="Hradecky P."/>
            <person name="Huang Y."/>
            <person name="Kaminker J.S."/>
            <person name="Millburn G.H."/>
            <person name="Prochnik S.E."/>
            <person name="Smith C.D."/>
            <person name="Tupy J.L."/>
            <person name="Whitfield E.J."/>
            <person name="Bayraktaroglu L."/>
            <person name="Berman B.P."/>
            <person name="Bettencourt B.R."/>
            <person name="Celniker S.E."/>
            <person name="de Grey A.D.N.J."/>
            <person name="Drysdale R.A."/>
            <person name="Harris N.L."/>
            <person name="Richter J."/>
            <person name="Russo S."/>
            <person name="Schroeder A.J."/>
            <person name="Shu S.Q."/>
            <person name="Stapleton M."/>
            <person name="Yamada C."/>
            <person name="Ashburner M."/>
            <person name="Gelbart W.M."/>
            <person name="Rubin G.M."/>
            <person name="Lewis S.E."/>
        </authorList>
    </citation>
    <scope>GENOME REANNOTATION</scope>
    <scope>ALTERNATIVE SPLICING</scope>
    <source>
        <strain>Berkeley</strain>
    </source>
</reference>
<reference key="3">
    <citation type="journal article" date="2002" name="Genome Biol.">
        <title>A Drosophila full-length cDNA resource.</title>
        <authorList>
            <person name="Stapleton M."/>
            <person name="Carlson J.W."/>
            <person name="Brokstein P."/>
            <person name="Yu C."/>
            <person name="Champe M."/>
            <person name="George R.A."/>
            <person name="Guarin H."/>
            <person name="Kronmiller B."/>
            <person name="Pacleb J.M."/>
            <person name="Park S."/>
            <person name="Wan K.H."/>
            <person name="Rubin G.M."/>
            <person name="Celniker S.E."/>
        </authorList>
    </citation>
    <scope>NUCLEOTIDE SEQUENCE [LARGE SCALE MRNA] (ISOFORM B)</scope>
    <source>
        <strain>Berkeley</strain>
        <tissue>Head</tissue>
    </source>
</reference>
<reference key="4">
    <citation type="journal article" date="2006" name="RNA">
        <title>RNA editing in Drosophila melanogaster: new targets and functional consequences.</title>
        <authorList>
            <person name="Stapleton M."/>
            <person name="Carlson J.W."/>
            <person name="Celniker S.E."/>
        </authorList>
    </citation>
    <scope>RNA EDITING OF POSITIONS 1684; 1860; 1900; 1915 AND 1917</scope>
</reference>
<reference key="5">
    <citation type="journal article" date="2008" name="J. Proteome Res.">
        <title>Phosphoproteome analysis of Drosophila melanogaster embryos.</title>
        <authorList>
            <person name="Zhai B."/>
            <person name="Villen J."/>
            <person name="Beausoleil S.A."/>
            <person name="Mintseris J."/>
            <person name="Gygi S.P."/>
        </authorList>
    </citation>
    <scope>PHOSPHORYLATION [LARGE SCALE ANALYSIS] AT SER-858</scope>
    <scope>IDENTIFICATION BY MASS SPECTROMETRY</scope>
    <source>
        <tissue>Embryo</tissue>
    </source>
</reference>
<gene>
    <name type="primary">Trpm</name>
    <name type="ORF">CG44240</name>
</gene>
<accession>A8DYE2</accession>
<accession>A1Z9Z5</accession>
<accession>Q0E967</accession>
<accession>Q7K1C1</accession>
<feature type="chain" id="PRO_0000341487" description="Transient receptor potential cation channel trpm">
    <location>
        <begin position="1"/>
        <end position="2023"/>
    </location>
</feature>
<feature type="topological domain" description="Cytoplasmic" evidence="2">
    <location>
        <begin position="1"/>
        <end position="653"/>
    </location>
</feature>
<feature type="transmembrane region" description="Helical" evidence="2">
    <location>
        <begin position="654"/>
        <end position="674"/>
    </location>
</feature>
<feature type="topological domain" description="Extracellular" evidence="2">
    <location>
        <begin position="675"/>
        <end position="927"/>
    </location>
</feature>
<feature type="transmembrane region" description="Helical" evidence="2">
    <location>
        <begin position="928"/>
        <end position="948"/>
    </location>
</feature>
<feature type="topological domain" description="Cytoplasmic" evidence="2">
    <location>
        <begin position="949"/>
        <end position="992"/>
    </location>
</feature>
<feature type="transmembrane region" description="Helical" evidence="2">
    <location>
        <begin position="993"/>
        <end position="1013"/>
    </location>
</feature>
<feature type="topological domain" description="Extracellular" evidence="2">
    <location>
        <begin position="1014"/>
        <end position="1024"/>
    </location>
</feature>
<feature type="transmembrane region" description="Helical" evidence="2">
    <location>
        <begin position="1025"/>
        <end position="1045"/>
    </location>
</feature>
<feature type="topological domain" description="Cytoplasmic" evidence="2">
    <location>
        <begin position="1046"/>
        <end position="1057"/>
    </location>
</feature>
<feature type="transmembrane region" description="Helical" evidence="2">
    <location>
        <begin position="1058"/>
        <end position="1078"/>
    </location>
</feature>
<feature type="topological domain" description="Extracellular" evidence="2">
    <location>
        <begin position="1079"/>
        <end position="1136"/>
    </location>
</feature>
<feature type="transmembrane region" description="Helical" evidence="2">
    <location>
        <begin position="1137"/>
        <end position="1157"/>
    </location>
</feature>
<feature type="topological domain" description="Cytoplasmic" evidence="2">
    <location>
        <begin position="1158"/>
        <end position="2023"/>
    </location>
</feature>
<feature type="region of interest" description="Disordered" evidence="3">
    <location>
        <begin position="56"/>
        <end position="81"/>
    </location>
</feature>
<feature type="region of interest" description="Disordered" evidence="3">
    <location>
        <begin position="833"/>
        <end position="858"/>
    </location>
</feature>
<feature type="region of interest" description="Disordered" evidence="3">
    <location>
        <begin position="1346"/>
        <end position="1365"/>
    </location>
</feature>
<feature type="region of interest" description="Disordered" evidence="3">
    <location>
        <begin position="1471"/>
        <end position="1507"/>
    </location>
</feature>
<feature type="region of interest" description="Disordered" evidence="3">
    <location>
        <begin position="1556"/>
        <end position="1585"/>
    </location>
</feature>
<feature type="region of interest" description="Disordered" evidence="3">
    <location>
        <begin position="1698"/>
        <end position="1734"/>
    </location>
</feature>
<feature type="region of interest" description="Disordered" evidence="3">
    <location>
        <begin position="1751"/>
        <end position="1770"/>
    </location>
</feature>
<feature type="region of interest" description="Disordered" evidence="3">
    <location>
        <begin position="1814"/>
        <end position="1844"/>
    </location>
</feature>
<feature type="region of interest" description="Disordered" evidence="3">
    <location>
        <begin position="1874"/>
        <end position="1904"/>
    </location>
</feature>
<feature type="region of interest" description="Disordered" evidence="3">
    <location>
        <begin position="1919"/>
        <end position="1939"/>
    </location>
</feature>
<feature type="region of interest" description="Disordered" evidence="3">
    <location>
        <begin position="1962"/>
        <end position="1990"/>
    </location>
</feature>
<feature type="region of interest" description="Disordered" evidence="3">
    <location>
        <begin position="2003"/>
        <end position="2023"/>
    </location>
</feature>
<feature type="compositionally biased region" description="Low complexity" evidence="3">
    <location>
        <begin position="56"/>
        <end position="70"/>
    </location>
</feature>
<feature type="compositionally biased region" description="Basic residues" evidence="3">
    <location>
        <begin position="71"/>
        <end position="81"/>
    </location>
</feature>
<feature type="compositionally biased region" description="Gly residues" evidence="3">
    <location>
        <begin position="1351"/>
        <end position="1365"/>
    </location>
</feature>
<feature type="compositionally biased region" description="Gly residues" evidence="3">
    <location>
        <begin position="1711"/>
        <end position="1724"/>
    </location>
</feature>
<feature type="compositionally biased region" description="Low complexity" evidence="3">
    <location>
        <begin position="1725"/>
        <end position="1734"/>
    </location>
</feature>
<feature type="compositionally biased region" description="Polar residues" evidence="3">
    <location>
        <begin position="1753"/>
        <end position="1764"/>
    </location>
</feature>
<feature type="compositionally biased region" description="Polar residues" evidence="3">
    <location>
        <begin position="1814"/>
        <end position="1835"/>
    </location>
</feature>
<feature type="compositionally biased region" description="Low complexity" evidence="3">
    <location>
        <begin position="1886"/>
        <end position="1895"/>
    </location>
</feature>
<feature type="compositionally biased region" description="Low complexity" evidence="3">
    <location>
        <begin position="1966"/>
        <end position="1977"/>
    </location>
</feature>
<feature type="compositionally biased region" description="Polar residues" evidence="3">
    <location>
        <begin position="1978"/>
        <end position="1990"/>
    </location>
</feature>
<feature type="modified residue" description="Phosphoserine" evidence="5">
    <location>
        <position position="858"/>
    </location>
</feature>
<feature type="splice variant" id="VSP_052814" description="In isoform B, isoform C and isoform D." evidence="6">
    <original>MVVTDSPLA</original>
    <variation>MYFETNWVF</variation>
    <location>
        <begin position="1"/>
        <end position="9"/>
    </location>
</feature>
<feature type="splice variant" id="VSP_052815" description="In isoform B, isoform C and isoform D." evidence="6">
    <location>
        <begin position="10"/>
        <end position="111"/>
    </location>
</feature>
<feature type="splice variant" id="VSP_052816" description="In isoform C." evidence="7">
    <original>WMFQRFTV</original>
    <variation>SVIESLRF</variation>
    <location>
        <begin position="1173"/>
        <end position="1180"/>
    </location>
</feature>
<feature type="splice variant" id="VSP_052817" description="In isoform C." evidence="7">
    <location>
        <begin position="1181"/>
        <end position="2023"/>
    </location>
</feature>
<feature type="splice variant" id="VSP_052818" description="In isoform B." evidence="6">
    <original>LEVQRDNGLKLFLEKDDLER</original>
    <variation>EPGMSKFSFVPCESIVSDAL</variation>
    <location>
        <begin position="1214"/>
        <end position="1233"/>
    </location>
</feature>
<feature type="splice variant" id="VSP_052819" description="In isoform B." evidence="6">
    <location>
        <begin position="1234"/>
        <end position="2023"/>
    </location>
</feature>
<feature type="sequence variant" description="In RNA edited version.">
    <original>I</original>
    <variation>M</variation>
    <location>
        <position position="1684"/>
    </location>
</feature>
<feature type="sequence variant" description="In RNA edited version.">
    <original>T</original>
    <variation>A</variation>
    <location>
        <position position="1860"/>
    </location>
</feature>
<feature type="sequence variant" description="In RNA edited version.">
    <original>Q</original>
    <variation>R</variation>
    <location>
        <position position="1900"/>
    </location>
</feature>
<feature type="sequence variant" description="In RNA edited version.">
    <original>Q</original>
    <variation>R</variation>
    <location>
        <position position="1915"/>
    </location>
</feature>
<feature type="sequence variant" description="In RNA edited version.">
    <original>S</original>
    <variation>G</variation>
    <location>
        <position position="1917"/>
    </location>
</feature>
<protein>
    <recommendedName>
        <fullName>Transient receptor potential cation channel trpm</fullName>
    </recommendedName>
    <alternativeName>
        <fullName>Transient receptor potential cation channel, subfamily M ortholog</fullName>
    </alternativeName>
</protein>